<accession>A0LCF3</accession>
<organism>
    <name type="scientific">Magnetococcus marinus (strain ATCC BAA-1437 / JCM 17883 / MC-1)</name>
    <dbReference type="NCBI Taxonomy" id="156889"/>
    <lineage>
        <taxon>Bacteria</taxon>
        <taxon>Pseudomonadati</taxon>
        <taxon>Pseudomonadota</taxon>
        <taxon>Alphaproteobacteria</taxon>
        <taxon>Magnetococcales</taxon>
        <taxon>Magnetococcaceae</taxon>
        <taxon>Magnetococcus</taxon>
    </lineage>
</organism>
<protein>
    <recommendedName>
        <fullName evidence="1">Imidazole glycerol phosphate synthase subunit HisF</fullName>
        <ecNumber evidence="1">4.3.2.10</ecNumber>
    </recommendedName>
    <alternativeName>
        <fullName evidence="1">IGP synthase cyclase subunit</fullName>
    </alternativeName>
    <alternativeName>
        <fullName evidence="1">IGP synthase subunit HisF</fullName>
    </alternativeName>
    <alternativeName>
        <fullName evidence="1">ImGP synthase subunit HisF</fullName>
        <shortName evidence="1">IGPS subunit HisF</shortName>
    </alternativeName>
</protein>
<keyword id="KW-0028">Amino-acid biosynthesis</keyword>
<keyword id="KW-0963">Cytoplasm</keyword>
<keyword id="KW-0368">Histidine biosynthesis</keyword>
<keyword id="KW-0456">Lyase</keyword>
<keyword id="KW-1185">Reference proteome</keyword>
<proteinExistence type="inferred from homology"/>
<reference key="1">
    <citation type="journal article" date="2009" name="Appl. Environ. Microbiol.">
        <title>Complete genome sequence of the chemolithoautotrophic marine magnetotactic coccus strain MC-1.</title>
        <authorList>
            <person name="Schubbe S."/>
            <person name="Williams T.J."/>
            <person name="Xie G."/>
            <person name="Kiss H.E."/>
            <person name="Brettin T.S."/>
            <person name="Martinez D."/>
            <person name="Ross C.A."/>
            <person name="Schuler D."/>
            <person name="Cox B.L."/>
            <person name="Nealson K.H."/>
            <person name="Bazylinski D.A."/>
        </authorList>
    </citation>
    <scope>NUCLEOTIDE SEQUENCE [LARGE SCALE GENOMIC DNA]</scope>
    <source>
        <strain>ATCC BAA-1437 / JCM 17883 / MC-1</strain>
    </source>
</reference>
<comment type="function">
    <text evidence="1">IGPS catalyzes the conversion of PRFAR and glutamine to IGP, AICAR and glutamate. The HisF subunit catalyzes the cyclization activity that produces IGP and AICAR from PRFAR using the ammonia provided by the HisH subunit.</text>
</comment>
<comment type="catalytic activity">
    <reaction evidence="1">
        <text>5-[(5-phospho-1-deoxy-D-ribulos-1-ylimino)methylamino]-1-(5-phospho-beta-D-ribosyl)imidazole-4-carboxamide + L-glutamine = D-erythro-1-(imidazol-4-yl)glycerol 3-phosphate + 5-amino-1-(5-phospho-beta-D-ribosyl)imidazole-4-carboxamide + L-glutamate + H(+)</text>
        <dbReference type="Rhea" id="RHEA:24793"/>
        <dbReference type="ChEBI" id="CHEBI:15378"/>
        <dbReference type="ChEBI" id="CHEBI:29985"/>
        <dbReference type="ChEBI" id="CHEBI:58278"/>
        <dbReference type="ChEBI" id="CHEBI:58359"/>
        <dbReference type="ChEBI" id="CHEBI:58475"/>
        <dbReference type="ChEBI" id="CHEBI:58525"/>
        <dbReference type="EC" id="4.3.2.10"/>
    </reaction>
</comment>
<comment type="pathway">
    <text evidence="1">Amino-acid biosynthesis; L-histidine biosynthesis; L-histidine from 5-phospho-alpha-D-ribose 1-diphosphate: step 5/9.</text>
</comment>
<comment type="subunit">
    <text evidence="1">Heterodimer of HisH and HisF.</text>
</comment>
<comment type="subcellular location">
    <subcellularLocation>
        <location evidence="1">Cytoplasm</location>
    </subcellularLocation>
</comment>
<comment type="similarity">
    <text evidence="1">Belongs to the HisA/HisF family.</text>
</comment>
<gene>
    <name evidence="1" type="primary">hisF</name>
    <name type="ordered locus">Mmc1_3156</name>
</gene>
<feature type="chain" id="PRO_1000063080" description="Imidazole glycerol phosphate synthase subunit HisF">
    <location>
        <begin position="1"/>
        <end position="258"/>
    </location>
</feature>
<feature type="active site" evidence="1">
    <location>
        <position position="11"/>
    </location>
</feature>
<feature type="active site" evidence="1">
    <location>
        <position position="130"/>
    </location>
</feature>
<name>HIS6_MAGMM</name>
<evidence type="ECO:0000255" key="1">
    <source>
        <dbReference type="HAMAP-Rule" id="MF_01013"/>
    </source>
</evidence>
<dbReference type="EC" id="4.3.2.10" evidence="1"/>
<dbReference type="EMBL" id="CP000471">
    <property type="protein sequence ID" value="ABK45646.1"/>
    <property type="molecule type" value="Genomic_DNA"/>
</dbReference>
<dbReference type="RefSeq" id="WP_011714709.1">
    <property type="nucleotide sequence ID" value="NC_008576.1"/>
</dbReference>
<dbReference type="SMR" id="A0LCF3"/>
<dbReference type="STRING" id="156889.Mmc1_3156"/>
<dbReference type="KEGG" id="mgm:Mmc1_3156"/>
<dbReference type="eggNOG" id="COG0107">
    <property type="taxonomic scope" value="Bacteria"/>
</dbReference>
<dbReference type="HOGENOM" id="CLU_048577_4_0_5"/>
<dbReference type="OrthoDB" id="9781903at2"/>
<dbReference type="UniPathway" id="UPA00031">
    <property type="reaction ID" value="UER00010"/>
</dbReference>
<dbReference type="Proteomes" id="UP000002586">
    <property type="component" value="Chromosome"/>
</dbReference>
<dbReference type="GO" id="GO:0005737">
    <property type="term" value="C:cytoplasm"/>
    <property type="evidence" value="ECO:0007669"/>
    <property type="project" value="UniProtKB-SubCell"/>
</dbReference>
<dbReference type="GO" id="GO:0000107">
    <property type="term" value="F:imidazoleglycerol-phosphate synthase activity"/>
    <property type="evidence" value="ECO:0007669"/>
    <property type="project" value="UniProtKB-UniRule"/>
</dbReference>
<dbReference type="GO" id="GO:0016829">
    <property type="term" value="F:lyase activity"/>
    <property type="evidence" value="ECO:0007669"/>
    <property type="project" value="UniProtKB-KW"/>
</dbReference>
<dbReference type="GO" id="GO:0000105">
    <property type="term" value="P:L-histidine biosynthetic process"/>
    <property type="evidence" value="ECO:0007669"/>
    <property type="project" value="UniProtKB-UniRule"/>
</dbReference>
<dbReference type="CDD" id="cd04731">
    <property type="entry name" value="HisF"/>
    <property type="match status" value="1"/>
</dbReference>
<dbReference type="FunFam" id="3.20.20.70:FF:000006">
    <property type="entry name" value="Imidazole glycerol phosphate synthase subunit HisF"/>
    <property type="match status" value="1"/>
</dbReference>
<dbReference type="Gene3D" id="3.20.20.70">
    <property type="entry name" value="Aldolase class I"/>
    <property type="match status" value="1"/>
</dbReference>
<dbReference type="HAMAP" id="MF_01013">
    <property type="entry name" value="HisF"/>
    <property type="match status" value="1"/>
</dbReference>
<dbReference type="InterPro" id="IPR013785">
    <property type="entry name" value="Aldolase_TIM"/>
</dbReference>
<dbReference type="InterPro" id="IPR006062">
    <property type="entry name" value="His_biosynth"/>
</dbReference>
<dbReference type="InterPro" id="IPR004651">
    <property type="entry name" value="HisF"/>
</dbReference>
<dbReference type="InterPro" id="IPR050064">
    <property type="entry name" value="IGPS_HisA/HisF"/>
</dbReference>
<dbReference type="InterPro" id="IPR011060">
    <property type="entry name" value="RibuloseP-bd_barrel"/>
</dbReference>
<dbReference type="NCBIfam" id="TIGR00735">
    <property type="entry name" value="hisF"/>
    <property type="match status" value="1"/>
</dbReference>
<dbReference type="PANTHER" id="PTHR21235:SF2">
    <property type="entry name" value="IMIDAZOLE GLYCEROL PHOSPHATE SYNTHASE HISHF"/>
    <property type="match status" value="1"/>
</dbReference>
<dbReference type="PANTHER" id="PTHR21235">
    <property type="entry name" value="IMIDAZOLE GLYCEROL PHOSPHATE SYNTHASE SUBUNIT HISF/H IGP SYNTHASE SUBUNIT HISF/H"/>
    <property type="match status" value="1"/>
</dbReference>
<dbReference type="Pfam" id="PF00977">
    <property type="entry name" value="His_biosynth"/>
    <property type="match status" value="1"/>
</dbReference>
<dbReference type="SUPFAM" id="SSF51366">
    <property type="entry name" value="Ribulose-phoshate binding barrel"/>
    <property type="match status" value="1"/>
</dbReference>
<sequence length="258" mass="28267">MMAKRIIPCLDVKAGRVVKGVQFEGLVDAGDPVEAAKRYDEEGADELTFLDITATHEDRGIMEDVVRRTAEQVFIPLTVGGGIRTNDDIRRMLVAGADKCSINSAAVKRPEFVREAAEQFGSQCVVVAIDAKCVEHDKHGRPIRWEIFTHGGRQPTGIDALEWAHRMESFGSGEILLTSMDKDGTKSGYALEMTRAISDAVTIPVIASGGVGEPKHLLEGLRQGGADAVLAASIFHFREYTIPQVKRYLRDNHIAVRL</sequence>